<organism>
    <name type="scientific">Xenopus laevis</name>
    <name type="common">African clawed frog</name>
    <dbReference type="NCBI Taxonomy" id="8355"/>
    <lineage>
        <taxon>Eukaryota</taxon>
        <taxon>Metazoa</taxon>
        <taxon>Chordata</taxon>
        <taxon>Craniata</taxon>
        <taxon>Vertebrata</taxon>
        <taxon>Euteleostomi</taxon>
        <taxon>Amphibia</taxon>
        <taxon>Batrachia</taxon>
        <taxon>Anura</taxon>
        <taxon>Pipoidea</taxon>
        <taxon>Pipidae</taxon>
        <taxon>Xenopodinae</taxon>
        <taxon>Xenopus</taxon>
        <taxon>Xenopus</taxon>
    </lineage>
</organism>
<sequence length="1331" mass="149611">MVLTQQENLSVLVGQRFTCLLGTDLQLDPDGVSKWPWKSGIVRAASHKDLHCPEIKIFVEFDDEAWEKRTWIELYGATVKMFLVEHNLVLADRVSPSNSVPVQCPAMVYKVLVGKFSLGTATCLQFLGDKDKLFLSKELVKPVRDRETLKQFMQENKTFNKAFQELIRKSVDESRLQQATRNIIGMPINVYSMDPSMQWFSATISNVRTASRALEIKCEQLPSLKIIDPALLHVVLVHNYGDLNDKSRKPRAPKRKSQDTESEDQTELKQTRNEEVPSKDVTQKTSFLTYRRDDGKTLVVVDNPKATNNLFNYINTTTEDQQKVQQQSLSSKQSVPVGFGEALLGCAATTPGILNAATPPQANSPPSFGAATPQGKGTQNLPGDTTLLNGEAKREETNLFLSAAASQGNKRSLGFGMMESPSTFSSLSSMPSWSGQPKSENGPKSENLFAAFTNSSTVFPKGFEFSVKSFPEQKMLSVTDSPKTAPPMTCVQQQEQKVVKKPENNHTSVRAIKPQEPPYPKSPNKNDGVTYPRSILLDPQKLKRLQQSGDCFVQDGSCNDIAPHLHKCRECRLDRFGRSREQRDSAVFCRFFHFRRLHFNKHGMLKEGGFLTPNKYDAEAINLWLPLASNVVDLDLDTAKYILANIGDHFCKLVMSEKEVMSATDPSKQVAWKRAVRGVREMCDACDTTIFNLHWVCPKCGFGVCVDCYRMKKKSLSSGEDGNETFSWLKCVKGQLHEPENLMPTQIVPGKALYDVGDIVHSVRGRWGIKSNCLCSNKHVRPVVKPVVKEEVKPSTPEPEPTKAPLAQPNVCTAPDPIAIPSTPPTPACSSPLSWLTNLSQTTVNKENKDNLFASNLEHKPLPSFASFGKPVSALQTFGSSILTPTTSNNSGFLRNLLNSSTLKQETNEKSTPKILDDIFASLVQSRPLSDFARKPQGLPIQPSLMGFNTPHYWLCDNRLLCLQDPNNKSNWNVFRECWKQGQPVIVSGIHNNLNSELWRPESFRREFGDQEADLVNCRTNDIITGATVGDFWEGFEDISARLKNDKGEAMVLKLKDWPPGEDFRDTMLSRFEDLMNNIPLPEYTRREGKLNLAARLPAYFVRPDLGPKMYNAYGLITPEDRKYGTTNLHLDVSDATNVMVYVGIPKGEHDQEQEVIRTIQDGDADELTIKRYIEFKEKPGALWHIFAAKDTEKIRQFLKKVAEEQGHENPPDHDPIHDQSWYLDNTLRKRLLQEHGVQGWAIVQFLGDAVFIPAGAPHQVHNLYSCIKVAEDFVSPEHVKHCFWLTQEFRYLSHTHTNHEDKLQVKNVIYHAVKDSIAILKANEASLGKL</sequence>
<evidence type="ECO:0000250" key="1"/>
<evidence type="ECO:0000250" key="2">
    <source>
        <dbReference type="UniProtKB" id="Q9Y4C1"/>
    </source>
</evidence>
<evidence type="ECO:0000255" key="3"/>
<evidence type="ECO:0000255" key="4">
    <source>
        <dbReference type="PROSITE-ProRule" id="PRU00538"/>
    </source>
</evidence>
<evidence type="ECO:0000256" key="5">
    <source>
        <dbReference type="SAM" id="MobiDB-lite"/>
    </source>
</evidence>
<evidence type="ECO:0000305" key="6"/>
<protein>
    <recommendedName>
        <fullName>Lysine-specific demethylase 3A-A</fullName>
        <ecNumber evidence="2">1.14.11.65</ecNumber>
    </recommendedName>
    <alternativeName>
        <fullName>JmjC domain-containing histone demethylation protein 2A</fullName>
    </alternativeName>
    <alternativeName>
        <fullName>Jumonji domain-containing protein 1A-A</fullName>
    </alternativeName>
    <alternativeName>
        <fullName evidence="6">[histone H3]-dimethyl-L-lysine(9) demethylase 3A-A</fullName>
    </alternativeName>
</protein>
<dbReference type="EC" id="1.14.11.65" evidence="2"/>
<dbReference type="EMBL" id="BC070982">
    <property type="protein sequence ID" value="AAH70982.1"/>
    <property type="molecule type" value="mRNA"/>
</dbReference>
<dbReference type="RefSeq" id="NP_001085045.1">
    <property type="nucleotide sequence ID" value="NM_001091576.1"/>
</dbReference>
<dbReference type="SMR" id="Q6IRB8"/>
<dbReference type="DNASU" id="432112"/>
<dbReference type="GeneID" id="432112"/>
<dbReference type="KEGG" id="xla:432112"/>
<dbReference type="AGR" id="Xenbase:XB-GENE-6256006"/>
<dbReference type="CTD" id="432112"/>
<dbReference type="Xenbase" id="XB-GENE-6256006">
    <property type="gene designation" value="kdm3a.L"/>
</dbReference>
<dbReference type="OrthoDB" id="1667110at2759"/>
<dbReference type="Proteomes" id="UP000186698">
    <property type="component" value="Chromosome 1L"/>
</dbReference>
<dbReference type="Bgee" id="432112">
    <property type="expression patterns" value="Expressed in egg cell and 19 other cell types or tissues"/>
</dbReference>
<dbReference type="GO" id="GO:0000785">
    <property type="term" value="C:chromatin"/>
    <property type="evidence" value="ECO:0000318"/>
    <property type="project" value="GO_Central"/>
</dbReference>
<dbReference type="GO" id="GO:0005737">
    <property type="term" value="C:cytoplasm"/>
    <property type="evidence" value="ECO:0007669"/>
    <property type="project" value="UniProtKB-SubCell"/>
</dbReference>
<dbReference type="GO" id="GO:0000118">
    <property type="term" value="C:histone deacetylase complex"/>
    <property type="evidence" value="ECO:0000318"/>
    <property type="project" value="GO_Central"/>
</dbReference>
<dbReference type="GO" id="GO:0031490">
    <property type="term" value="F:chromatin DNA binding"/>
    <property type="evidence" value="ECO:0000318"/>
    <property type="project" value="GO_Central"/>
</dbReference>
<dbReference type="GO" id="GO:0032454">
    <property type="term" value="F:histone H3K9 demethylase activity"/>
    <property type="evidence" value="ECO:0000318"/>
    <property type="project" value="GO_Central"/>
</dbReference>
<dbReference type="GO" id="GO:0140683">
    <property type="term" value="F:histone H3K9me/H3K9me2 demethylase activity"/>
    <property type="evidence" value="ECO:0007669"/>
    <property type="project" value="UniProtKB-EC"/>
</dbReference>
<dbReference type="GO" id="GO:0003712">
    <property type="term" value="F:transcription coregulator activity"/>
    <property type="evidence" value="ECO:0000318"/>
    <property type="project" value="GO_Central"/>
</dbReference>
<dbReference type="GO" id="GO:0008270">
    <property type="term" value="F:zinc ion binding"/>
    <property type="evidence" value="ECO:0007669"/>
    <property type="project" value="UniProtKB-KW"/>
</dbReference>
<dbReference type="GO" id="GO:0006357">
    <property type="term" value="P:regulation of transcription by RNA polymerase II"/>
    <property type="evidence" value="ECO:0000318"/>
    <property type="project" value="GO_Central"/>
</dbReference>
<dbReference type="CDD" id="cd02208">
    <property type="entry name" value="cupin_RmlC-like"/>
    <property type="match status" value="1"/>
</dbReference>
<dbReference type="FunFam" id="2.60.120.650:FF:000004">
    <property type="entry name" value="Putative lysine-specific demethylase 3B"/>
    <property type="match status" value="1"/>
</dbReference>
<dbReference type="Gene3D" id="2.60.120.650">
    <property type="entry name" value="Cupin"/>
    <property type="match status" value="1"/>
</dbReference>
<dbReference type="InterPro" id="IPR054294">
    <property type="entry name" value="DUF7030"/>
</dbReference>
<dbReference type="InterPro" id="IPR045109">
    <property type="entry name" value="JHDM2-like"/>
</dbReference>
<dbReference type="InterPro" id="IPR003347">
    <property type="entry name" value="JmjC_dom"/>
</dbReference>
<dbReference type="InterPro" id="IPR054503">
    <property type="entry name" value="KDM3AB_Tudor"/>
</dbReference>
<dbReference type="InterPro" id="IPR054504">
    <property type="entry name" value="PWWP_KDM3B"/>
</dbReference>
<dbReference type="PANTHER" id="PTHR12549">
    <property type="entry name" value="JMJC DOMAIN-CONTAINING HISTONE DEMETHYLATION PROTEIN"/>
    <property type="match status" value="1"/>
</dbReference>
<dbReference type="PANTHER" id="PTHR12549:SF7">
    <property type="entry name" value="LYSINE-SPECIFIC DEMETHYLASE 3A"/>
    <property type="match status" value="1"/>
</dbReference>
<dbReference type="Pfam" id="PF22989">
    <property type="entry name" value="DUF7030"/>
    <property type="match status" value="1"/>
</dbReference>
<dbReference type="Pfam" id="PF02373">
    <property type="entry name" value="JmjC"/>
    <property type="match status" value="1"/>
</dbReference>
<dbReference type="Pfam" id="PF22988">
    <property type="entry name" value="PWWP_KDM3B"/>
    <property type="match status" value="1"/>
</dbReference>
<dbReference type="Pfam" id="PF22987">
    <property type="entry name" value="Tudor_KDM3B"/>
    <property type="match status" value="1"/>
</dbReference>
<dbReference type="SMART" id="SM00558">
    <property type="entry name" value="JmjC"/>
    <property type="match status" value="1"/>
</dbReference>
<dbReference type="SUPFAM" id="SSF51197">
    <property type="entry name" value="Clavaminate synthase-like"/>
    <property type="match status" value="1"/>
</dbReference>
<dbReference type="PROSITE" id="PS51184">
    <property type="entry name" value="JMJC"/>
    <property type="match status" value="1"/>
</dbReference>
<reference key="1">
    <citation type="submission" date="2004-05" db="EMBL/GenBank/DDBJ databases">
        <authorList>
            <consortium name="NIH - Xenopus Gene Collection (XGC) project"/>
        </authorList>
    </citation>
    <scope>NUCLEOTIDE SEQUENCE [LARGE SCALE MRNA]</scope>
    <source>
        <tissue>Embryo</tissue>
    </source>
</reference>
<proteinExistence type="evidence at transcript level"/>
<feature type="chain" id="PRO_0000234371" description="Lysine-specific demethylase 3A-A">
    <location>
        <begin position="1"/>
        <end position="1331"/>
    </location>
</feature>
<feature type="domain" description="JmjC" evidence="4">
    <location>
        <begin position="1086"/>
        <end position="1291"/>
    </location>
</feature>
<feature type="zinc finger region" description="C6-type" evidence="3">
    <location>
        <begin position="683"/>
        <end position="708"/>
    </location>
</feature>
<feature type="region of interest" description="Disordered" evidence="5">
    <location>
        <begin position="243"/>
        <end position="280"/>
    </location>
</feature>
<feature type="region of interest" description="Disordered" evidence="5">
    <location>
        <begin position="358"/>
        <end position="381"/>
    </location>
</feature>
<feature type="region of interest" description="Disordered" evidence="5">
    <location>
        <begin position="497"/>
        <end position="532"/>
    </location>
</feature>
<feature type="short sequence motif" description="LXXLL motif">
    <location>
        <begin position="894"/>
        <end position="898"/>
    </location>
</feature>
<feature type="compositionally biased region" description="Basic and acidic residues" evidence="5">
    <location>
        <begin position="266"/>
        <end position="280"/>
    </location>
</feature>
<feature type="binding site" evidence="4">
    <location>
        <position position="1130"/>
    </location>
    <ligand>
        <name>Fe cation</name>
        <dbReference type="ChEBI" id="CHEBI:24875"/>
        <note>catalytic</note>
    </ligand>
</feature>
<feature type="binding site" evidence="4">
    <location>
        <position position="1132"/>
    </location>
    <ligand>
        <name>Fe cation</name>
        <dbReference type="ChEBI" id="CHEBI:24875"/>
        <note>catalytic</note>
    </ligand>
</feature>
<feature type="binding site" evidence="4">
    <location>
        <position position="1259"/>
    </location>
    <ligand>
        <name>Fe cation</name>
        <dbReference type="ChEBI" id="CHEBI:24875"/>
        <note>catalytic</note>
    </ligand>
</feature>
<name>KD3AA_XENLA</name>
<gene>
    <name type="primary">kdm3a-a</name>
    <name type="synonym">jhdm2a-a</name>
    <name type="synonym">jmjd1a-a</name>
</gene>
<accession>Q6IRB8</accession>
<keyword id="KW-0156">Chromatin regulator</keyword>
<keyword id="KW-0963">Cytoplasm</keyword>
<keyword id="KW-0223">Dioxygenase</keyword>
<keyword id="KW-0408">Iron</keyword>
<keyword id="KW-0479">Metal-binding</keyword>
<keyword id="KW-0539">Nucleus</keyword>
<keyword id="KW-0560">Oxidoreductase</keyword>
<keyword id="KW-1185">Reference proteome</keyword>
<keyword id="KW-0804">Transcription</keyword>
<keyword id="KW-0805">Transcription regulation</keyword>
<keyword id="KW-0862">Zinc</keyword>
<keyword id="KW-0863">Zinc-finger</keyword>
<comment type="function">
    <text evidence="1">Histone demethylase that specifically demethylates 'Lys-9' of histone H3, thereby playing a central role in histone code. Preferentially demethylates mono- and dimethylated H3 'Lys-9' residue, with a preference for dimethylated residue, while it has weak or no activity on trimethylated H3 'Lys-9'. Demethylation of Lys residue generates formaldehyde and succinate (By similarity).</text>
</comment>
<comment type="catalytic activity">
    <reaction evidence="2">
        <text>N(6),N(6)-dimethyl-L-lysyl(9)-[histone H3] + 2 2-oxoglutarate + 2 O2 = L-lysyl(9)-[histone H3] + 2 formaldehyde + 2 succinate + 2 CO2</text>
        <dbReference type="Rhea" id="RHEA:60188"/>
        <dbReference type="Rhea" id="RHEA-COMP:15541"/>
        <dbReference type="Rhea" id="RHEA-COMP:15546"/>
        <dbReference type="ChEBI" id="CHEBI:15379"/>
        <dbReference type="ChEBI" id="CHEBI:16526"/>
        <dbReference type="ChEBI" id="CHEBI:16810"/>
        <dbReference type="ChEBI" id="CHEBI:16842"/>
        <dbReference type="ChEBI" id="CHEBI:29969"/>
        <dbReference type="ChEBI" id="CHEBI:30031"/>
        <dbReference type="ChEBI" id="CHEBI:61976"/>
        <dbReference type="EC" id="1.14.11.65"/>
    </reaction>
</comment>
<comment type="cofactor">
    <cofactor evidence="1">
        <name>Fe(2+)</name>
        <dbReference type="ChEBI" id="CHEBI:29033"/>
    </cofactor>
    <text evidence="1">Binds 1 Fe(2+) ion per subunit.</text>
</comment>
<comment type="subcellular location">
    <subcellularLocation>
        <location evidence="1">Cytoplasm</location>
    </subcellularLocation>
    <subcellularLocation>
        <location evidence="1">Nucleus</location>
    </subcellularLocation>
</comment>
<comment type="domain">
    <text evidence="1">The JmjC domain and the C6-type zinc-finger are required for the demethylation activity.</text>
</comment>
<comment type="domain">
    <text evidence="1">Leu-Xaa-Xaa-Leu-Leu (LXXLL) motifs are known to mediate the association with nuclear receptors.</text>
</comment>
<comment type="similarity">
    <text evidence="6">Belongs to the JHDM2 histone demethylase family.</text>
</comment>